<protein>
    <recommendedName>
        <fullName evidence="1">Acyl carrier protein</fullName>
        <shortName evidence="1">ACP</shortName>
    </recommendedName>
</protein>
<dbReference type="EMBL" id="CP000494">
    <property type="protein sequence ID" value="ABQ35895.1"/>
    <property type="molecule type" value="Genomic_DNA"/>
</dbReference>
<dbReference type="RefSeq" id="WP_006610957.1">
    <property type="nucleotide sequence ID" value="NC_009485.1"/>
</dbReference>
<dbReference type="SMR" id="A5EIA1"/>
<dbReference type="STRING" id="288000.BBta_3819"/>
<dbReference type="KEGG" id="bbt:BBta_3819"/>
<dbReference type="eggNOG" id="COG0236">
    <property type="taxonomic scope" value="Bacteria"/>
</dbReference>
<dbReference type="HOGENOM" id="CLU_108696_5_1_5"/>
<dbReference type="OrthoDB" id="9804551at2"/>
<dbReference type="UniPathway" id="UPA00094"/>
<dbReference type="Proteomes" id="UP000000246">
    <property type="component" value="Chromosome"/>
</dbReference>
<dbReference type="GO" id="GO:0005829">
    <property type="term" value="C:cytosol"/>
    <property type="evidence" value="ECO:0007669"/>
    <property type="project" value="TreeGrafter"/>
</dbReference>
<dbReference type="GO" id="GO:0016020">
    <property type="term" value="C:membrane"/>
    <property type="evidence" value="ECO:0007669"/>
    <property type="project" value="GOC"/>
</dbReference>
<dbReference type="GO" id="GO:0000035">
    <property type="term" value="F:acyl binding"/>
    <property type="evidence" value="ECO:0007669"/>
    <property type="project" value="TreeGrafter"/>
</dbReference>
<dbReference type="GO" id="GO:0000036">
    <property type="term" value="F:acyl carrier activity"/>
    <property type="evidence" value="ECO:0007669"/>
    <property type="project" value="UniProtKB-UniRule"/>
</dbReference>
<dbReference type="GO" id="GO:0009245">
    <property type="term" value="P:lipid A biosynthetic process"/>
    <property type="evidence" value="ECO:0007669"/>
    <property type="project" value="TreeGrafter"/>
</dbReference>
<dbReference type="FunFam" id="1.10.1200.10:FF:000012">
    <property type="entry name" value="Acyl carrier protein"/>
    <property type="match status" value="1"/>
</dbReference>
<dbReference type="Gene3D" id="1.10.1200.10">
    <property type="entry name" value="ACP-like"/>
    <property type="match status" value="1"/>
</dbReference>
<dbReference type="HAMAP" id="MF_01217">
    <property type="entry name" value="Acyl_carrier"/>
    <property type="match status" value="1"/>
</dbReference>
<dbReference type="InterPro" id="IPR003231">
    <property type="entry name" value="ACP"/>
</dbReference>
<dbReference type="InterPro" id="IPR036736">
    <property type="entry name" value="ACP-like_sf"/>
</dbReference>
<dbReference type="InterPro" id="IPR009081">
    <property type="entry name" value="PP-bd_ACP"/>
</dbReference>
<dbReference type="InterPro" id="IPR006162">
    <property type="entry name" value="Ppantetheine_attach_site"/>
</dbReference>
<dbReference type="NCBIfam" id="TIGR00517">
    <property type="entry name" value="acyl_carrier"/>
    <property type="match status" value="1"/>
</dbReference>
<dbReference type="NCBIfam" id="NF002148">
    <property type="entry name" value="PRK00982.1-2"/>
    <property type="match status" value="1"/>
</dbReference>
<dbReference type="NCBIfam" id="NF002149">
    <property type="entry name" value="PRK00982.1-3"/>
    <property type="match status" value="1"/>
</dbReference>
<dbReference type="NCBIfam" id="NF002150">
    <property type="entry name" value="PRK00982.1-4"/>
    <property type="match status" value="1"/>
</dbReference>
<dbReference type="NCBIfam" id="NF002151">
    <property type="entry name" value="PRK00982.1-5"/>
    <property type="match status" value="1"/>
</dbReference>
<dbReference type="PANTHER" id="PTHR20863">
    <property type="entry name" value="ACYL CARRIER PROTEIN"/>
    <property type="match status" value="1"/>
</dbReference>
<dbReference type="PANTHER" id="PTHR20863:SF76">
    <property type="entry name" value="CARRIER DOMAIN-CONTAINING PROTEIN"/>
    <property type="match status" value="1"/>
</dbReference>
<dbReference type="Pfam" id="PF00550">
    <property type="entry name" value="PP-binding"/>
    <property type="match status" value="1"/>
</dbReference>
<dbReference type="SUPFAM" id="SSF47336">
    <property type="entry name" value="ACP-like"/>
    <property type="match status" value="1"/>
</dbReference>
<dbReference type="PROSITE" id="PS50075">
    <property type="entry name" value="CARRIER"/>
    <property type="match status" value="1"/>
</dbReference>
<dbReference type="PROSITE" id="PS00012">
    <property type="entry name" value="PHOSPHOPANTETHEINE"/>
    <property type="match status" value="1"/>
</dbReference>
<proteinExistence type="inferred from homology"/>
<accession>A5EIA1</accession>
<sequence length="79" mass="8600">MSEIGERVKKIVVEHLGVEPEKVVDNASFIDDLGADSLDTVELVMAFEEEFGCEIPDDAAETILTVGDATKFLEKNAKS</sequence>
<feature type="chain" id="PRO_1000066564" description="Acyl carrier protein">
    <location>
        <begin position="1"/>
        <end position="79"/>
    </location>
</feature>
<feature type="domain" description="Carrier" evidence="2">
    <location>
        <begin position="2"/>
        <end position="77"/>
    </location>
</feature>
<feature type="modified residue" description="O-(pantetheine 4'-phosphoryl)serine" evidence="2">
    <location>
        <position position="37"/>
    </location>
</feature>
<gene>
    <name evidence="1" type="primary">acpP</name>
    <name type="ordered locus">BBta_3819</name>
</gene>
<evidence type="ECO:0000255" key="1">
    <source>
        <dbReference type="HAMAP-Rule" id="MF_01217"/>
    </source>
</evidence>
<evidence type="ECO:0000255" key="2">
    <source>
        <dbReference type="PROSITE-ProRule" id="PRU00258"/>
    </source>
</evidence>
<comment type="function">
    <text evidence="1">Carrier of the growing fatty acid chain in fatty acid biosynthesis.</text>
</comment>
<comment type="pathway">
    <text evidence="1">Lipid metabolism; fatty acid biosynthesis.</text>
</comment>
<comment type="subcellular location">
    <subcellularLocation>
        <location evidence="1">Cytoplasm</location>
    </subcellularLocation>
</comment>
<comment type="PTM">
    <text evidence="1">4'-phosphopantetheine is transferred from CoA to a specific serine of apo-ACP by AcpS. This modification is essential for activity because fatty acids are bound in thioester linkage to the sulfhydryl of the prosthetic group.</text>
</comment>
<comment type="similarity">
    <text evidence="1">Belongs to the acyl carrier protein (ACP) family.</text>
</comment>
<organism>
    <name type="scientific">Bradyrhizobium sp. (strain BTAi1 / ATCC BAA-1182)</name>
    <dbReference type="NCBI Taxonomy" id="288000"/>
    <lineage>
        <taxon>Bacteria</taxon>
        <taxon>Pseudomonadati</taxon>
        <taxon>Pseudomonadota</taxon>
        <taxon>Alphaproteobacteria</taxon>
        <taxon>Hyphomicrobiales</taxon>
        <taxon>Nitrobacteraceae</taxon>
        <taxon>Bradyrhizobium</taxon>
    </lineage>
</organism>
<name>ACP_BRASB</name>
<keyword id="KW-0963">Cytoplasm</keyword>
<keyword id="KW-0275">Fatty acid biosynthesis</keyword>
<keyword id="KW-0276">Fatty acid metabolism</keyword>
<keyword id="KW-0444">Lipid biosynthesis</keyword>
<keyword id="KW-0443">Lipid metabolism</keyword>
<keyword id="KW-0596">Phosphopantetheine</keyword>
<keyword id="KW-0597">Phosphoprotein</keyword>
<keyword id="KW-1185">Reference proteome</keyword>
<reference key="1">
    <citation type="journal article" date="2007" name="Science">
        <title>Legumes symbioses: absence of nod genes in photosynthetic bradyrhizobia.</title>
        <authorList>
            <person name="Giraud E."/>
            <person name="Moulin L."/>
            <person name="Vallenet D."/>
            <person name="Barbe V."/>
            <person name="Cytryn E."/>
            <person name="Avarre J.-C."/>
            <person name="Jaubert M."/>
            <person name="Simon D."/>
            <person name="Cartieaux F."/>
            <person name="Prin Y."/>
            <person name="Bena G."/>
            <person name="Hannibal L."/>
            <person name="Fardoux J."/>
            <person name="Kojadinovic M."/>
            <person name="Vuillet L."/>
            <person name="Lajus A."/>
            <person name="Cruveiller S."/>
            <person name="Rouy Z."/>
            <person name="Mangenot S."/>
            <person name="Segurens B."/>
            <person name="Dossat C."/>
            <person name="Franck W.L."/>
            <person name="Chang W.-S."/>
            <person name="Saunders E."/>
            <person name="Bruce D."/>
            <person name="Richardson P."/>
            <person name="Normand P."/>
            <person name="Dreyfus B."/>
            <person name="Pignol D."/>
            <person name="Stacey G."/>
            <person name="Emerich D."/>
            <person name="Vermeglio A."/>
            <person name="Medigue C."/>
            <person name="Sadowsky M."/>
        </authorList>
    </citation>
    <scope>NUCLEOTIDE SEQUENCE [LARGE SCALE GENOMIC DNA]</scope>
    <source>
        <strain>BTAi1 / ATCC BAA-1182</strain>
    </source>
</reference>